<feature type="chain" id="PRO_0000304906" description="Putative secretory carrier-associated membrane protein 1">
    <location>
        <begin position="1"/>
        <end position="306"/>
    </location>
</feature>
<feature type="topological domain" description="Cytoplasmic" evidence="2">
    <location>
        <begin position="1"/>
        <end position="141"/>
    </location>
</feature>
<feature type="transmembrane region" description="Helical" evidence="2">
    <location>
        <begin position="142"/>
        <end position="162"/>
    </location>
</feature>
<feature type="transmembrane region" description="Helical" evidence="2">
    <location>
        <begin position="174"/>
        <end position="194"/>
    </location>
</feature>
<feature type="transmembrane region" description="Helical" evidence="2">
    <location>
        <begin position="209"/>
        <end position="229"/>
    </location>
</feature>
<feature type="transmembrane region" description="Helical" evidence="2">
    <location>
        <begin position="257"/>
        <end position="277"/>
    </location>
</feature>
<feature type="topological domain" description="Cytoplasmic" evidence="2">
    <location>
        <begin position="278"/>
        <end position="306"/>
    </location>
</feature>
<feature type="region of interest" description="Disordered" evidence="3">
    <location>
        <begin position="1"/>
        <end position="60"/>
    </location>
</feature>
<feature type="coiled-coil region" evidence="2">
    <location>
        <begin position="72"/>
        <end position="109"/>
    </location>
</feature>
<feature type="compositionally biased region" description="Gly residues" evidence="3">
    <location>
        <begin position="25"/>
        <end position="36"/>
    </location>
</feature>
<feature type="compositionally biased region" description="Polar residues" evidence="3">
    <location>
        <begin position="44"/>
        <end position="54"/>
    </location>
</feature>
<sequence>MAGRYDSNPFEEDDVNPFSEQARGKAGGQPSYGGGAFYMPNPRNVPSMSSNSRLSPLPPEPAAFGATVDIPLDSSKDLKNREKELQAREAELNKREKELKRREEAAARAGIVIEEKNWPPFLPLIHHDITNEIPSHLQRMQYVAFASFLGLACCLFWNVIAVTSAWVKGEGVKIWLLAIIYFISGVPGAYVLWYRPLYNAMRTDSALKFGLFFLVYLFHILFCVFSAVAPPVVFEGKSLAGILPAIDLISKNALVGIFYFVGFGLFCVESLLSIWVIQQVYMYFRGSGKAAEMKRDATRGAMRAAF</sequence>
<evidence type="ECO:0000250" key="1"/>
<evidence type="ECO:0000255" key="2"/>
<evidence type="ECO:0000256" key="3">
    <source>
        <dbReference type="SAM" id="MobiDB-lite"/>
    </source>
</evidence>
<evidence type="ECO:0000305" key="4"/>
<name>SCAM1_ORYSI</name>
<comment type="function">
    <text evidence="1">Probably involved in membrane trafficking.</text>
</comment>
<comment type="subcellular location">
    <subcellularLocation>
        <location evidence="1">Cell membrane</location>
        <topology evidence="1">Multi-pass membrane protein</topology>
    </subcellularLocation>
    <subcellularLocation>
        <location evidence="1">Cytoplasmic vesicle</location>
        <location evidence="1">Secretory vesicle membrane</location>
        <topology evidence="1">Multi-pass membrane protein</topology>
    </subcellularLocation>
</comment>
<comment type="similarity">
    <text evidence="4">Belongs to the SCAMP family.</text>
</comment>
<keyword id="KW-1003">Cell membrane</keyword>
<keyword id="KW-0175">Coiled coil</keyword>
<keyword id="KW-0968">Cytoplasmic vesicle</keyword>
<keyword id="KW-0472">Membrane</keyword>
<keyword id="KW-1185">Reference proteome</keyword>
<keyword id="KW-0812">Transmembrane</keyword>
<keyword id="KW-1133">Transmembrane helix</keyword>
<keyword id="KW-0813">Transport</keyword>
<accession>A2YMP7</accession>
<reference key="1">
    <citation type="journal article" date="2005" name="PLoS Biol.">
        <title>The genomes of Oryza sativa: a history of duplications.</title>
        <authorList>
            <person name="Yu J."/>
            <person name="Wang J."/>
            <person name="Lin W."/>
            <person name="Li S."/>
            <person name="Li H."/>
            <person name="Zhou J."/>
            <person name="Ni P."/>
            <person name="Dong W."/>
            <person name="Hu S."/>
            <person name="Zeng C."/>
            <person name="Zhang J."/>
            <person name="Zhang Y."/>
            <person name="Li R."/>
            <person name="Xu Z."/>
            <person name="Li S."/>
            <person name="Li X."/>
            <person name="Zheng H."/>
            <person name="Cong L."/>
            <person name="Lin L."/>
            <person name="Yin J."/>
            <person name="Geng J."/>
            <person name="Li G."/>
            <person name="Shi J."/>
            <person name="Liu J."/>
            <person name="Lv H."/>
            <person name="Li J."/>
            <person name="Wang J."/>
            <person name="Deng Y."/>
            <person name="Ran L."/>
            <person name="Shi X."/>
            <person name="Wang X."/>
            <person name="Wu Q."/>
            <person name="Li C."/>
            <person name="Ren X."/>
            <person name="Wang J."/>
            <person name="Wang X."/>
            <person name="Li D."/>
            <person name="Liu D."/>
            <person name="Zhang X."/>
            <person name="Ji Z."/>
            <person name="Zhao W."/>
            <person name="Sun Y."/>
            <person name="Zhang Z."/>
            <person name="Bao J."/>
            <person name="Han Y."/>
            <person name="Dong L."/>
            <person name="Ji J."/>
            <person name="Chen P."/>
            <person name="Wu S."/>
            <person name="Liu J."/>
            <person name="Xiao Y."/>
            <person name="Bu D."/>
            <person name="Tan J."/>
            <person name="Yang L."/>
            <person name="Ye C."/>
            <person name="Zhang J."/>
            <person name="Xu J."/>
            <person name="Zhou Y."/>
            <person name="Yu Y."/>
            <person name="Zhang B."/>
            <person name="Zhuang S."/>
            <person name="Wei H."/>
            <person name="Liu B."/>
            <person name="Lei M."/>
            <person name="Yu H."/>
            <person name="Li Y."/>
            <person name="Xu H."/>
            <person name="Wei S."/>
            <person name="He X."/>
            <person name="Fang L."/>
            <person name="Zhang Z."/>
            <person name="Zhang Y."/>
            <person name="Huang X."/>
            <person name="Su Z."/>
            <person name="Tong W."/>
            <person name="Li J."/>
            <person name="Tong Z."/>
            <person name="Li S."/>
            <person name="Ye J."/>
            <person name="Wang L."/>
            <person name="Fang L."/>
            <person name="Lei T."/>
            <person name="Chen C.-S."/>
            <person name="Chen H.-C."/>
            <person name="Xu Z."/>
            <person name="Li H."/>
            <person name="Huang H."/>
            <person name="Zhang F."/>
            <person name="Xu H."/>
            <person name="Li N."/>
            <person name="Zhao C."/>
            <person name="Li S."/>
            <person name="Dong L."/>
            <person name="Huang Y."/>
            <person name="Li L."/>
            <person name="Xi Y."/>
            <person name="Qi Q."/>
            <person name="Li W."/>
            <person name="Zhang B."/>
            <person name="Hu W."/>
            <person name="Zhang Y."/>
            <person name="Tian X."/>
            <person name="Jiao Y."/>
            <person name="Liang X."/>
            <person name="Jin J."/>
            <person name="Gao L."/>
            <person name="Zheng W."/>
            <person name="Hao B."/>
            <person name="Liu S.-M."/>
            <person name="Wang W."/>
            <person name="Yuan L."/>
            <person name="Cao M."/>
            <person name="McDermott J."/>
            <person name="Samudrala R."/>
            <person name="Wang J."/>
            <person name="Wong G.K.-S."/>
            <person name="Yang H."/>
        </authorList>
    </citation>
    <scope>NUCLEOTIDE SEQUENCE [LARGE SCALE GENOMIC DNA]</scope>
    <source>
        <strain>cv. 93-11</strain>
    </source>
</reference>
<dbReference type="EMBL" id="CM000132">
    <property type="protein sequence ID" value="EAZ04358.1"/>
    <property type="molecule type" value="Genomic_DNA"/>
</dbReference>
<dbReference type="SMR" id="A2YMP7"/>
<dbReference type="STRING" id="39946.A2YMP7"/>
<dbReference type="EnsemblPlants" id="BGIOSGA024081-TA">
    <property type="protein sequence ID" value="BGIOSGA024081-PA"/>
    <property type="gene ID" value="BGIOSGA024081"/>
</dbReference>
<dbReference type="Gramene" id="BGIOSGA024081-TA">
    <property type="protein sequence ID" value="BGIOSGA024081-PA"/>
    <property type="gene ID" value="BGIOSGA024081"/>
</dbReference>
<dbReference type="HOGENOM" id="CLU_066546_3_0_1"/>
<dbReference type="OMA" id="NMVACIF"/>
<dbReference type="Proteomes" id="UP000007015">
    <property type="component" value="Chromosome 7"/>
</dbReference>
<dbReference type="GO" id="GO:0005769">
    <property type="term" value="C:early endosome"/>
    <property type="evidence" value="ECO:0007669"/>
    <property type="project" value="EnsemblPlants"/>
</dbReference>
<dbReference type="GO" id="GO:0005886">
    <property type="term" value="C:plasma membrane"/>
    <property type="evidence" value="ECO:0007669"/>
    <property type="project" value="UniProtKB-SubCell"/>
</dbReference>
<dbReference type="GO" id="GO:0055038">
    <property type="term" value="C:recycling endosome membrane"/>
    <property type="evidence" value="ECO:0007669"/>
    <property type="project" value="TreeGrafter"/>
</dbReference>
<dbReference type="GO" id="GO:0032588">
    <property type="term" value="C:trans-Golgi network membrane"/>
    <property type="evidence" value="ECO:0007669"/>
    <property type="project" value="TreeGrafter"/>
</dbReference>
<dbReference type="GO" id="GO:0030658">
    <property type="term" value="C:transport vesicle membrane"/>
    <property type="evidence" value="ECO:0007669"/>
    <property type="project" value="UniProtKB-SubCell"/>
</dbReference>
<dbReference type="GO" id="GO:0015031">
    <property type="term" value="P:protein transport"/>
    <property type="evidence" value="ECO:0007669"/>
    <property type="project" value="InterPro"/>
</dbReference>
<dbReference type="InterPro" id="IPR007273">
    <property type="entry name" value="SCAMP"/>
</dbReference>
<dbReference type="PANTHER" id="PTHR10687:SF74">
    <property type="entry name" value="SECRETORY CARRIER-ASSOCIATED MEMBRANE PROTEIN 1"/>
    <property type="match status" value="1"/>
</dbReference>
<dbReference type="PANTHER" id="PTHR10687">
    <property type="entry name" value="SECRETORY CARRIER-ASSOCIATED MEMBRANE PROTEIN SCAMP"/>
    <property type="match status" value="1"/>
</dbReference>
<dbReference type="Pfam" id="PF04144">
    <property type="entry name" value="SCAMP"/>
    <property type="match status" value="1"/>
</dbReference>
<organism>
    <name type="scientific">Oryza sativa subsp. indica</name>
    <name type="common">Rice</name>
    <dbReference type="NCBI Taxonomy" id="39946"/>
    <lineage>
        <taxon>Eukaryota</taxon>
        <taxon>Viridiplantae</taxon>
        <taxon>Streptophyta</taxon>
        <taxon>Embryophyta</taxon>
        <taxon>Tracheophyta</taxon>
        <taxon>Spermatophyta</taxon>
        <taxon>Magnoliopsida</taxon>
        <taxon>Liliopsida</taxon>
        <taxon>Poales</taxon>
        <taxon>Poaceae</taxon>
        <taxon>BOP clade</taxon>
        <taxon>Oryzoideae</taxon>
        <taxon>Oryzeae</taxon>
        <taxon>Oryzinae</taxon>
        <taxon>Oryza</taxon>
        <taxon>Oryza sativa</taxon>
    </lineage>
</organism>
<gene>
    <name type="primary">SCAMP1</name>
    <name type="ORF">OsI_025590</name>
</gene>
<protein>
    <recommendedName>
        <fullName>Putative secretory carrier-associated membrane protein 1</fullName>
        <shortName>Secretory carrier membrane protein 1</shortName>
    </recommendedName>
</protein>
<proteinExistence type="inferred from homology"/>